<evidence type="ECO:0000250" key="1"/>
<evidence type="ECO:0000256" key="2">
    <source>
        <dbReference type="SAM" id="MobiDB-lite"/>
    </source>
</evidence>
<evidence type="ECO:0000305" key="3"/>
<organism>
    <name type="scientific">Candida dubliniensis (strain CD36 / ATCC MYA-646 / CBS 7987 / NCPF 3949 / NRRL Y-17841)</name>
    <name type="common">Yeast</name>
    <dbReference type="NCBI Taxonomy" id="573826"/>
    <lineage>
        <taxon>Eukaryota</taxon>
        <taxon>Fungi</taxon>
        <taxon>Dikarya</taxon>
        <taxon>Ascomycota</taxon>
        <taxon>Saccharomycotina</taxon>
        <taxon>Pichiomycetes</taxon>
        <taxon>Debaryomycetaceae</taxon>
        <taxon>Candida/Lodderomyces clade</taxon>
        <taxon>Candida</taxon>
    </lineage>
</organism>
<proteinExistence type="inferred from homology"/>
<accession>B9W7H9</accession>
<gene>
    <name type="primary">NOP9</name>
    <name type="ORF">CD36_03800</name>
</gene>
<comment type="function">
    <text evidence="1">RNA-binding nucleolar protein required for pre-rRNA processing. Involved in production of 18S rRNA and assembly of small ribosomal subunit (By similarity).</text>
</comment>
<comment type="subcellular location">
    <subcellularLocation>
        <location evidence="1">Nucleus</location>
        <location evidence="1">Nucleolus</location>
    </subcellularLocation>
</comment>
<comment type="similarity">
    <text evidence="3">Belongs to the NOP9 family.</text>
</comment>
<sequence>MGKTKSRGRRAEKKSKKNEPEFNEDVSNLDSDATFANHESSSTSGIPNTFFGLVDNNELDYFKQAESTLNINAFESEEERQGFINSVLEEAQGKELKLVTNQICSKLMERLILFANYNQLKKIFKQFQNHFVSLAFHKYASHVLETLLVRSAALIEKELTQTDEEQLQLQEEKEEEDKDSINDVPMEDLFISMLNEFKPHLTTMIDHSYASHVLRLLILILAGKELPSSITSNSTLRSKKSKIARKMIEIKDNEDFDRAFQTPQSFKNELRAYCQTIIAGLDTKSARELSIHKIGSPVLQLLIQVEGLVDRERSFWHLIFAKDSEGKDSVEESFVEYLLSDSVGSHFLESIIKNDGARPKYIERLYKLYMKDRVLKLAKRSTTGVYIIQALLFKLKPVEVEYILDQIIPELAELISIADNQNLDLANKLIDASISRGNYRRDEIINQLFIKFAPNYDIENPSDNTSTEFIENILQLTGSTLGNTRDDWPTAEERKRALFLEKLMEYDYKFVICTWFNFMALPIERFVQMCFHGVFCHVVEKALIVEPEEPKTIQILRKRLLNIFQSQIVGLACNSYGSHIVDTLWNFTVLLPMYKDRIASELLSESHKVKESTYGRLVWKNWGMELFVRKKYDWKALIKQQEQEYYGETEDSTEKRAKKPIELKMERLAEEKRRQEEMAERAQSGYTKRKLEEATGTGSEKKQKLRGRRR</sequence>
<dbReference type="EMBL" id="FM992688">
    <property type="protein sequence ID" value="CAX44639.1"/>
    <property type="molecule type" value="Genomic_DNA"/>
</dbReference>
<dbReference type="RefSeq" id="XP_002417050.1">
    <property type="nucleotide sequence ID" value="XM_002417005.1"/>
</dbReference>
<dbReference type="SMR" id="B9W7H9"/>
<dbReference type="GeneID" id="8044586"/>
<dbReference type="KEGG" id="cdu:CD36_03800"/>
<dbReference type="CGD" id="CAL0000166870">
    <property type="gene designation" value="Cd36_03800"/>
</dbReference>
<dbReference type="VEuPathDB" id="FungiDB:CD36_03800"/>
<dbReference type="eggNOG" id="KOG2188">
    <property type="taxonomic scope" value="Eukaryota"/>
</dbReference>
<dbReference type="HOGENOM" id="CLU_008720_1_1_1"/>
<dbReference type="OrthoDB" id="392571at2759"/>
<dbReference type="Proteomes" id="UP000002605">
    <property type="component" value="Chromosome 1"/>
</dbReference>
<dbReference type="GO" id="GO:0030686">
    <property type="term" value="C:90S preribosome"/>
    <property type="evidence" value="ECO:0007669"/>
    <property type="project" value="TreeGrafter"/>
</dbReference>
<dbReference type="GO" id="GO:0005730">
    <property type="term" value="C:nucleolus"/>
    <property type="evidence" value="ECO:0007669"/>
    <property type="project" value="UniProtKB-SubCell"/>
</dbReference>
<dbReference type="GO" id="GO:0030688">
    <property type="term" value="C:preribosome, small subunit precursor"/>
    <property type="evidence" value="ECO:0007669"/>
    <property type="project" value="TreeGrafter"/>
</dbReference>
<dbReference type="GO" id="GO:0003723">
    <property type="term" value="F:RNA binding"/>
    <property type="evidence" value="ECO:0007669"/>
    <property type="project" value="InterPro"/>
</dbReference>
<dbReference type="GO" id="GO:0000480">
    <property type="term" value="P:endonucleolytic cleavage in 5'-ETS of tricistronic rRNA transcript (SSU-rRNA, 5.8S rRNA, LSU-rRNA)"/>
    <property type="evidence" value="ECO:0007669"/>
    <property type="project" value="TreeGrafter"/>
</dbReference>
<dbReference type="GO" id="GO:0000447">
    <property type="term" value="P:endonucleolytic cleavage in ITS1 to separate SSU-rRNA from 5.8S rRNA and LSU-rRNA from tricistronic rRNA transcript (SSU-rRNA, 5.8S rRNA, LSU-rRNA)"/>
    <property type="evidence" value="ECO:0007669"/>
    <property type="project" value="TreeGrafter"/>
</dbReference>
<dbReference type="GO" id="GO:0000472">
    <property type="term" value="P:endonucleolytic cleavage to generate mature 5'-end of SSU-rRNA from (SSU-rRNA, 5.8S rRNA, LSU-rRNA)"/>
    <property type="evidence" value="ECO:0007669"/>
    <property type="project" value="TreeGrafter"/>
</dbReference>
<dbReference type="GO" id="GO:0000056">
    <property type="term" value="P:ribosomal small subunit export from nucleus"/>
    <property type="evidence" value="ECO:0007669"/>
    <property type="project" value="TreeGrafter"/>
</dbReference>
<dbReference type="Gene3D" id="1.25.10.10">
    <property type="entry name" value="Leucine-rich Repeat Variant"/>
    <property type="match status" value="3"/>
</dbReference>
<dbReference type="InterPro" id="IPR011989">
    <property type="entry name" value="ARM-like"/>
</dbReference>
<dbReference type="InterPro" id="IPR016024">
    <property type="entry name" value="ARM-type_fold"/>
</dbReference>
<dbReference type="InterPro" id="IPR040000">
    <property type="entry name" value="NOP9"/>
</dbReference>
<dbReference type="InterPro" id="IPR001313">
    <property type="entry name" value="Pumilio_RNA-bd_rpt"/>
</dbReference>
<dbReference type="PANTHER" id="PTHR13102">
    <property type="entry name" value="NUCLEOLAR PROTEIN 9"/>
    <property type="match status" value="1"/>
</dbReference>
<dbReference type="PANTHER" id="PTHR13102:SF0">
    <property type="entry name" value="NUCLEOLAR PROTEIN 9"/>
    <property type="match status" value="1"/>
</dbReference>
<dbReference type="Pfam" id="PF22493">
    <property type="entry name" value="PUF_NOP9"/>
    <property type="match status" value="1"/>
</dbReference>
<dbReference type="SMART" id="SM00025">
    <property type="entry name" value="Pumilio"/>
    <property type="match status" value="8"/>
</dbReference>
<dbReference type="SUPFAM" id="SSF48371">
    <property type="entry name" value="ARM repeat"/>
    <property type="match status" value="1"/>
</dbReference>
<dbReference type="PROSITE" id="PS50302">
    <property type="entry name" value="PUM"/>
    <property type="match status" value="7"/>
</dbReference>
<name>NOP9_CANDC</name>
<keyword id="KW-0539">Nucleus</keyword>
<keyword id="KW-0677">Repeat</keyword>
<keyword id="KW-0690">Ribosome biogenesis</keyword>
<keyword id="KW-0698">rRNA processing</keyword>
<protein>
    <recommendedName>
        <fullName>Nucleolar protein 9</fullName>
    </recommendedName>
    <alternativeName>
        <fullName>Pumilio domain-containing protein NOP9</fullName>
    </alternativeName>
</protein>
<feature type="chain" id="PRO_0000407805" description="Nucleolar protein 9">
    <location>
        <begin position="1"/>
        <end position="710"/>
    </location>
</feature>
<feature type="repeat" description="Pumilio 1">
    <location>
        <begin position="90"/>
        <end position="125"/>
    </location>
</feature>
<feature type="repeat" description="Pumilio 2">
    <location>
        <begin position="126"/>
        <end position="161"/>
    </location>
</feature>
<feature type="repeat" description="Pumilio 3">
    <location>
        <begin position="196"/>
        <end position="232"/>
    </location>
</feature>
<feature type="repeat" description="Pumilio 4">
    <location>
        <begin position="280"/>
        <end position="321"/>
    </location>
</feature>
<feature type="repeat" description="Pumilio 5">
    <location>
        <begin position="329"/>
        <end position="367"/>
    </location>
</feature>
<feature type="repeat" description="Pumilio 6">
    <location>
        <begin position="369"/>
        <end position="405"/>
    </location>
</feature>
<feature type="repeat" description="Pumilio 7">
    <location>
        <begin position="520"/>
        <end position="557"/>
    </location>
</feature>
<feature type="repeat" description="Pumilio 8">
    <location>
        <begin position="562"/>
        <end position="600"/>
    </location>
</feature>
<feature type="region of interest" description="Disordered" evidence="2">
    <location>
        <begin position="1"/>
        <end position="43"/>
    </location>
</feature>
<feature type="region of interest" description="Disordered" evidence="2">
    <location>
        <begin position="648"/>
        <end position="710"/>
    </location>
</feature>
<feature type="compositionally biased region" description="Basic residues" evidence="2">
    <location>
        <begin position="1"/>
        <end position="16"/>
    </location>
</feature>
<feature type="compositionally biased region" description="Basic and acidic residues" evidence="2">
    <location>
        <begin position="652"/>
        <end position="680"/>
    </location>
</feature>
<reference key="1">
    <citation type="journal article" date="2009" name="Genome Res.">
        <title>Comparative genomics of the fungal pathogens Candida dubliniensis and Candida albicans.</title>
        <authorList>
            <person name="Jackson A.P."/>
            <person name="Gamble J.A."/>
            <person name="Yeomans T."/>
            <person name="Moran G.P."/>
            <person name="Saunders D."/>
            <person name="Harris D."/>
            <person name="Aslett M."/>
            <person name="Barrell J.F."/>
            <person name="Butler G."/>
            <person name="Citiulo F."/>
            <person name="Coleman D.C."/>
            <person name="de Groot P.W.J."/>
            <person name="Goodwin T.J."/>
            <person name="Quail M.A."/>
            <person name="McQuillan J."/>
            <person name="Munro C.A."/>
            <person name="Pain A."/>
            <person name="Poulter R.T."/>
            <person name="Rajandream M.A."/>
            <person name="Renauld H."/>
            <person name="Spiering M.J."/>
            <person name="Tivey A."/>
            <person name="Gow N.A.R."/>
            <person name="Barrell B."/>
            <person name="Sullivan D.J."/>
            <person name="Berriman M."/>
        </authorList>
    </citation>
    <scope>NUCLEOTIDE SEQUENCE [LARGE SCALE GENOMIC DNA]</scope>
    <source>
        <strain>CD36 / ATCC MYA-646 / CBS 7987 / NCPF 3949 / NRRL Y-17841</strain>
    </source>
</reference>